<sequence length="134" mass="15130">MDNILVNNKNKNLLDLNKEDIKKSCEIEDKIFHSKTVNDVDLNLNSKNDISSKMKFIMDVPVHLTIEVGTVKITIKDLLELRSKSILVLDKHAGDPLNILVNGYVIATGELVVTENKYGIRIINIIDNSVFKKL</sequence>
<protein>
    <recommendedName>
        <fullName>Flagellar motor switch protein FliN</fullName>
    </recommendedName>
</protein>
<feature type="chain" id="PRO_0000184116" description="Flagellar motor switch protein FliN">
    <location>
        <begin position="1"/>
        <end position="134"/>
    </location>
</feature>
<evidence type="ECO:0000250" key="1"/>
<evidence type="ECO:0000305" key="2"/>
<gene>
    <name type="primary">fliN</name>
    <name type="ordered locus">bbp_075</name>
</gene>
<accession>Q89AZ3</accession>
<dbReference type="EMBL" id="AE016826">
    <property type="protein sequence ID" value="AAO26811.1"/>
    <property type="molecule type" value="Genomic_DNA"/>
</dbReference>
<dbReference type="SMR" id="Q89AZ3"/>
<dbReference type="STRING" id="224915.bbp_075"/>
<dbReference type="KEGG" id="bab:bbp_075"/>
<dbReference type="eggNOG" id="COG1886">
    <property type="taxonomic scope" value="Bacteria"/>
</dbReference>
<dbReference type="HOGENOM" id="CLU_097058_2_0_6"/>
<dbReference type="OrthoDB" id="9773459at2"/>
<dbReference type="Proteomes" id="UP000000601">
    <property type="component" value="Chromosome"/>
</dbReference>
<dbReference type="GO" id="GO:0009425">
    <property type="term" value="C:bacterial-type flagellum basal body"/>
    <property type="evidence" value="ECO:0007669"/>
    <property type="project" value="UniProtKB-SubCell"/>
</dbReference>
<dbReference type="GO" id="GO:0005886">
    <property type="term" value="C:plasma membrane"/>
    <property type="evidence" value="ECO:0007669"/>
    <property type="project" value="UniProtKB-SubCell"/>
</dbReference>
<dbReference type="GO" id="GO:0003774">
    <property type="term" value="F:cytoskeletal motor activity"/>
    <property type="evidence" value="ECO:0007669"/>
    <property type="project" value="InterPro"/>
</dbReference>
<dbReference type="GO" id="GO:0071973">
    <property type="term" value="P:bacterial-type flagellum-dependent cell motility"/>
    <property type="evidence" value="ECO:0007669"/>
    <property type="project" value="InterPro"/>
</dbReference>
<dbReference type="GO" id="GO:0006935">
    <property type="term" value="P:chemotaxis"/>
    <property type="evidence" value="ECO:0007669"/>
    <property type="project" value="UniProtKB-KW"/>
</dbReference>
<dbReference type="Gene3D" id="2.30.330.10">
    <property type="entry name" value="SpoA-like"/>
    <property type="match status" value="1"/>
</dbReference>
<dbReference type="InterPro" id="IPR012826">
    <property type="entry name" value="FliN"/>
</dbReference>
<dbReference type="InterPro" id="IPR001543">
    <property type="entry name" value="FliN-like_C"/>
</dbReference>
<dbReference type="InterPro" id="IPR051469">
    <property type="entry name" value="FliN/MopA/SpaO"/>
</dbReference>
<dbReference type="InterPro" id="IPR001172">
    <property type="entry name" value="FliN_T3SS_HrcQb"/>
</dbReference>
<dbReference type="InterPro" id="IPR036429">
    <property type="entry name" value="SpoA-like_sf"/>
</dbReference>
<dbReference type="NCBIfam" id="TIGR02480">
    <property type="entry name" value="fliN"/>
    <property type="match status" value="1"/>
</dbReference>
<dbReference type="PANTHER" id="PTHR43484">
    <property type="match status" value="1"/>
</dbReference>
<dbReference type="PANTHER" id="PTHR43484:SF1">
    <property type="entry name" value="FLAGELLAR MOTOR SWITCH PROTEIN FLIN"/>
    <property type="match status" value="1"/>
</dbReference>
<dbReference type="Pfam" id="PF01052">
    <property type="entry name" value="FliMN_C"/>
    <property type="match status" value="1"/>
</dbReference>
<dbReference type="PRINTS" id="PR00956">
    <property type="entry name" value="FLGMOTORFLIN"/>
</dbReference>
<dbReference type="SUPFAM" id="SSF101801">
    <property type="entry name" value="Surface presentation of antigens (SPOA)"/>
    <property type="match status" value="1"/>
</dbReference>
<name>FLIN_BUCBP</name>
<comment type="function">
    <text evidence="1">FliN is one of three proteins (FliG, FliN, FliM) that form the rotor-mounted switch complex (C ring), located at the base of the basal body. This complex interacts with the CheY and CheZ chemotaxis proteins, in addition to contacting components of the motor that determine the direction of flagellar rotation (By similarity).</text>
</comment>
<comment type="subcellular location">
    <subcellularLocation>
        <location evidence="1">Cell membrane</location>
        <topology evidence="1">Peripheral membrane protein</topology>
        <orientation evidence="1">Cytoplasmic side</orientation>
    </subcellularLocation>
    <subcellularLocation>
        <location evidence="1">Bacterial flagellum basal body</location>
    </subcellularLocation>
</comment>
<comment type="similarity">
    <text evidence="2">Belongs to the FliN/MopA/SpaO family.</text>
</comment>
<keyword id="KW-0975">Bacterial flagellum</keyword>
<keyword id="KW-1003">Cell membrane</keyword>
<keyword id="KW-0145">Chemotaxis</keyword>
<keyword id="KW-0283">Flagellar rotation</keyword>
<keyword id="KW-0472">Membrane</keyword>
<keyword id="KW-1185">Reference proteome</keyword>
<reference key="1">
    <citation type="journal article" date="2003" name="Proc. Natl. Acad. Sci. U.S.A.">
        <title>Reductive genome evolution in Buchnera aphidicola.</title>
        <authorList>
            <person name="van Ham R.C.H.J."/>
            <person name="Kamerbeek J."/>
            <person name="Palacios C."/>
            <person name="Rausell C."/>
            <person name="Abascal F."/>
            <person name="Bastolla U."/>
            <person name="Fernandez J.M."/>
            <person name="Jimenez L."/>
            <person name="Postigo M."/>
            <person name="Silva F.J."/>
            <person name="Tamames J."/>
            <person name="Viguera E."/>
            <person name="Latorre A."/>
            <person name="Valencia A."/>
            <person name="Moran F."/>
            <person name="Moya A."/>
        </authorList>
    </citation>
    <scope>NUCLEOTIDE SEQUENCE [LARGE SCALE GENOMIC DNA]</scope>
    <source>
        <strain>Bp</strain>
    </source>
</reference>
<proteinExistence type="inferred from homology"/>
<organism>
    <name type="scientific">Buchnera aphidicola subsp. Baizongia pistaciae (strain Bp)</name>
    <dbReference type="NCBI Taxonomy" id="224915"/>
    <lineage>
        <taxon>Bacteria</taxon>
        <taxon>Pseudomonadati</taxon>
        <taxon>Pseudomonadota</taxon>
        <taxon>Gammaproteobacteria</taxon>
        <taxon>Enterobacterales</taxon>
        <taxon>Erwiniaceae</taxon>
        <taxon>Buchnera</taxon>
    </lineage>
</organism>